<proteinExistence type="inferred from homology"/>
<reference key="1">
    <citation type="submission" date="2005-08" db="EMBL/GenBank/DDBJ databases">
        <title>Complete sequence of chromosome 1 of Nitrosospira multiformis ATCC 25196.</title>
        <authorList>
            <person name="Copeland A."/>
            <person name="Lucas S."/>
            <person name="Lapidus A."/>
            <person name="Barry K."/>
            <person name="Detter J.C."/>
            <person name="Glavina T."/>
            <person name="Hammon N."/>
            <person name="Israni S."/>
            <person name="Pitluck S."/>
            <person name="Chain P."/>
            <person name="Malfatti S."/>
            <person name="Shin M."/>
            <person name="Vergez L."/>
            <person name="Schmutz J."/>
            <person name="Larimer F."/>
            <person name="Land M."/>
            <person name="Hauser L."/>
            <person name="Kyrpides N."/>
            <person name="Lykidis A."/>
            <person name="Richardson P."/>
        </authorList>
    </citation>
    <scope>NUCLEOTIDE SEQUENCE [LARGE SCALE GENOMIC DNA]</scope>
    <source>
        <strain>ATCC 25196 / NCIMB 11849 / C 71</strain>
    </source>
</reference>
<dbReference type="EC" id="7.1.2.2" evidence="1"/>
<dbReference type="EMBL" id="CP000103">
    <property type="protein sequence ID" value="ABB74952.1"/>
    <property type="molecule type" value="Genomic_DNA"/>
</dbReference>
<dbReference type="RefSeq" id="WP_011380975.1">
    <property type="nucleotide sequence ID" value="NC_007614.1"/>
</dbReference>
<dbReference type="SMR" id="Q2Y8G9"/>
<dbReference type="STRING" id="323848.Nmul_A1654"/>
<dbReference type="KEGG" id="nmu:Nmul_A1654"/>
<dbReference type="eggNOG" id="COG0056">
    <property type="taxonomic scope" value="Bacteria"/>
</dbReference>
<dbReference type="HOGENOM" id="CLU_010091_2_1_4"/>
<dbReference type="OrthoDB" id="9803053at2"/>
<dbReference type="Proteomes" id="UP000002718">
    <property type="component" value="Chromosome"/>
</dbReference>
<dbReference type="GO" id="GO:0005886">
    <property type="term" value="C:plasma membrane"/>
    <property type="evidence" value="ECO:0007669"/>
    <property type="project" value="UniProtKB-SubCell"/>
</dbReference>
<dbReference type="GO" id="GO:0045259">
    <property type="term" value="C:proton-transporting ATP synthase complex"/>
    <property type="evidence" value="ECO:0007669"/>
    <property type="project" value="UniProtKB-KW"/>
</dbReference>
<dbReference type="GO" id="GO:0043531">
    <property type="term" value="F:ADP binding"/>
    <property type="evidence" value="ECO:0007669"/>
    <property type="project" value="TreeGrafter"/>
</dbReference>
<dbReference type="GO" id="GO:0005524">
    <property type="term" value="F:ATP binding"/>
    <property type="evidence" value="ECO:0007669"/>
    <property type="project" value="UniProtKB-UniRule"/>
</dbReference>
<dbReference type="GO" id="GO:0046933">
    <property type="term" value="F:proton-transporting ATP synthase activity, rotational mechanism"/>
    <property type="evidence" value="ECO:0007669"/>
    <property type="project" value="UniProtKB-UniRule"/>
</dbReference>
<dbReference type="CDD" id="cd18113">
    <property type="entry name" value="ATP-synt_F1_alpha_C"/>
    <property type="match status" value="1"/>
</dbReference>
<dbReference type="CDD" id="cd18116">
    <property type="entry name" value="ATP-synt_F1_alpha_N"/>
    <property type="match status" value="1"/>
</dbReference>
<dbReference type="CDD" id="cd01132">
    <property type="entry name" value="F1-ATPase_alpha_CD"/>
    <property type="match status" value="1"/>
</dbReference>
<dbReference type="FunFam" id="3.40.50.300:FF:000002">
    <property type="entry name" value="ATP synthase subunit alpha"/>
    <property type="match status" value="1"/>
</dbReference>
<dbReference type="Gene3D" id="2.40.30.20">
    <property type="match status" value="1"/>
</dbReference>
<dbReference type="Gene3D" id="1.20.150.20">
    <property type="entry name" value="ATP synthase alpha/beta chain, C-terminal domain"/>
    <property type="match status" value="1"/>
</dbReference>
<dbReference type="Gene3D" id="3.40.50.300">
    <property type="entry name" value="P-loop containing nucleotide triphosphate hydrolases"/>
    <property type="match status" value="1"/>
</dbReference>
<dbReference type="HAMAP" id="MF_01346">
    <property type="entry name" value="ATP_synth_alpha_bact"/>
    <property type="match status" value="1"/>
</dbReference>
<dbReference type="InterPro" id="IPR017710">
    <property type="entry name" value="Alt_ATP_synth_F1_asu"/>
</dbReference>
<dbReference type="InterPro" id="IPR023366">
    <property type="entry name" value="ATP_synth_asu-like_sf"/>
</dbReference>
<dbReference type="InterPro" id="IPR000793">
    <property type="entry name" value="ATP_synth_asu_C"/>
</dbReference>
<dbReference type="InterPro" id="IPR038376">
    <property type="entry name" value="ATP_synth_asu_C_sf"/>
</dbReference>
<dbReference type="InterPro" id="IPR033732">
    <property type="entry name" value="ATP_synth_F1_a_nt-bd_dom"/>
</dbReference>
<dbReference type="InterPro" id="IPR005294">
    <property type="entry name" value="ATP_synth_F1_asu"/>
</dbReference>
<dbReference type="InterPro" id="IPR020003">
    <property type="entry name" value="ATPase_a/bsu_AS"/>
</dbReference>
<dbReference type="InterPro" id="IPR036121">
    <property type="entry name" value="ATPase_F1/V1/A1_a/bsu_N_sf"/>
</dbReference>
<dbReference type="InterPro" id="IPR000194">
    <property type="entry name" value="ATPase_F1/V1/A1_a/bsu_nucl-bd"/>
</dbReference>
<dbReference type="InterPro" id="IPR027417">
    <property type="entry name" value="P-loop_NTPase"/>
</dbReference>
<dbReference type="NCBIfam" id="TIGR03324">
    <property type="entry name" value="alt_F1F0_F1_al"/>
    <property type="match status" value="1"/>
</dbReference>
<dbReference type="NCBIfam" id="TIGR00962">
    <property type="entry name" value="atpA"/>
    <property type="match status" value="1"/>
</dbReference>
<dbReference type="NCBIfam" id="NF009884">
    <property type="entry name" value="PRK13343.1"/>
    <property type="match status" value="1"/>
</dbReference>
<dbReference type="PANTHER" id="PTHR48082">
    <property type="entry name" value="ATP SYNTHASE SUBUNIT ALPHA, MITOCHONDRIAL"/>
    <property type="match status" value="1"/>
</dbReference>
<dbReference type="PANTHER" id="PTHR48082:SF2">
    <property type="entry name" value="ATP SYNTHASE SUBUNIT ALPHA, MITOCHONDRIAL"/>
    <property type="match status" value="1"/>
</dbReference>
<dbReference type="Pfam" id="PF00006">
    <property type="entry name" value="ATP-synt_ab"/>
    <property type="match status" value="1"/>
</dbReference>
<dbReference type="Pfam" id="PF00306">
    <property type="entry name" value="ATP-synt_ab_C"/>
    <property type="match status" value="1"/>
</dbReference>
<dbReference type="SUPFAM" id="SSF47917">
    <property type="entry name" value="C-terminal domain of alpha and beta subunits of F1 ATP synthase"/>
    <property type="match status" value="1"/>
</dbReference>
<dbReference type="SUPFAM" id="SSF50615">
    <property type="entry name" value="N-terminal domain of alpha and beta subunits of F1 ATP synthase"/>
    <property type="match status" value="1"/>
</dbReference>
<dbReference type="SUPFAM" id="SSF52540">
    <property type="entry name" value="P-loop containing nucleoside triphosphate hydrolases"/>
    <property type="match status" value="1"/>
</dbReference>
<dbReference type="PROSITE" id="PS00152">
    <property type="entry name" value="ATPASE_ALPHA_BETA"/>
    <property type="match status" value="1"/>
</dbReference>
<feature type="chain" id="PRO_0000238306" description="ATP synthase subunit alpha 2">
    <location>
        <begin position="1"/>
        <end position="511"/>
    </location>
</feature>
<feature type="binding site" evidence="1">
    <location>
        <begin position="173"/>
        <end position="180"/>
    </location>
    <ligand>
        <name>ATP</name>
        <dbReference type="ChEBI" id="CHEBI:30616"/>
    </ligand>
</feature>
<feature type="site" description="Required for activity" evidence="1">
    <location>
        <position position="366"/>
    </location>
</feature>
<organism>
    <name type="scientific">Nitrosospira multiformis (strain ATCC 25196 / NCIMB 11849 / C 71)</name>
    <dbReference type="NCBI Taxonomy" id="323848"/>
    <lineage>
        <taxon>Bacteria</taxon>
        <taxon>Pseudomonadati</taxon>
        <taxon>Pseudomonadota</taxon>
        <taxon>Betaproteobacteria</taxon>
        <taxon>Nitrosomonadales</taxon>
        <taxon>Nitrosomonadaceae</taxon>
        <taxon>Nitrosospira</taxon>
    </lineage>
</organism>
<evidence type="ECO:0000255" key="1">
    <source>
        <dbReference type="HAMAP-Rule" id="MF_01346"/>
    </source>
</evidence>
<keyword id="KW-0066">ATP synthesis</keyword>
<keyword id="KW-0067">ATP-binding</keyword>
<keyword id="KW-0997">Cell inner membrane</keyword>
<keyword id="KW-1003">Cell membrane</keyword>
<keyword id="KW-0139">CF(1)</keyword>
<keyword id="KW-0375">Hydrogen ion transport</keyword>
<keyword id="KW-0406">Ion transport</keyword>
<keyword id="KW-0472">Membrane</keyword>
<keyword id="KW-0547">Nucleotide-binding</keyword>
<keyword id="KW-1185">Reference proteome</keyword>
<keyword id="KW-1278">Translocase</keyword>
<keyword id="KW-0813">Transport</keyword>
<name>ATPA2_NITMU</name>
<gene>
    <name evidence="1" type="primary">atpA2</name>
    <name type="ordered locus">Nmul_A1654</name>
</gene>
<comment type="function">
    <text evidence="1">Produces ATP from ADP in the presence of a proton gradient across the membrane. The alpha chain is a regulatory subunit.</text>
</comment>
<comment type="catalytic activity">
    <reaction evidence="1">
        <text>ATP + H2O + 4 H(+)(in) = ADP + phosphate + 5 H(+)(out)</text>
        <dbReference type="Rhea" id="RHEA:57720"/>
        <dbReference type="ChEBI" id="CHEBI:15377"/>
        <dbReference type="ChEBI" id="CHEBI:15378"/>
        <dbReference type="ChEBI" id="CHEBI:30616"/>
        <dbReference type="ChEBI" id="CHEBI:43474"/>
        <dbReference type="ChEBI" id="CHEBI:456216"/>
        <dbReference type="EC" id="7.1.2.2"/>
    </reaction>
</comment>
<comment type="subunit">
    <text evidence="1">F-type ATPases have 2 components, CF(1) - the catalytic core - and CF(0) - the membrane proton channel. CF(1) has five subunits: alpha(3), beta(3), gamma(1), delta(1), epsilon(1). CF(0) has three main subunits: a(1), b(2) and c(9-12). The alpha and beta chains form an alternating ring which encloses part of the gamma chain. CF(1) is attached to CF(0) by a central stalk formed by the gamma and epsilon chains, while a peripheral stalk is formed by the delta and b chains.</text>
</comment>
<comment type="subcellular location">
    <subcellularLocation>
        <location evidence="1">Cell inner membrane</location>
        <topology evidence="1">Peripheral membrane protein</topology>
    </subcellularLocation>
</comment>
<comment type="similarity">
    <text evidence="1">Belongs to the ATPase alpha/beta chains family.</text>
</comment>
<protein>
    <recommendedName>
        <fullName evidence="1">ATP synthase subunit alpha 2</fullName>
        <ecNumber evidence="1">7.1.2.2</ecNumber>
    </recommendedName>
    <alternativeName>
        <fullName evidence="1">ATP synthase F1 sector subunit alpha 2</fullName>
    </alternativeName>
    <alternativeName>
        <fullName evidence="1">F-ATPase subunit alpha 2</fullName>
    </alternativeName>
</protein>
<accession>Q2Y8G9</accession>
<sequence length="511" mass="55673">MNQDRLRDVFDGAFSRIALARKIVTPRLMLKEIGVIKSIGTGIAKVSGLPGTCFEEVLKFPGGYGIAFNIEEEEIGVILLGDHSHLRAGDEVERRGHVMDVPVGDALIGRIVNPLGRALDGEAPVISSRRMPIERPAPQIMDRAPVTVPLQTGIKVIDALIPVGRGQRELILGDRQTGKSAIALDTILNQKDENVVCIYCAIGQQASSVAKVVAALQENDALSYTVVVVTEGNDPPGLIYVAPYAATAIGEYFMEQGRDVLIVYDDLSHHARAYRELSLLMRRPPGREAYPGDIFYIHSRLLERATHLRPELGGGSLTALPIVETEAEDIAAYIPTNLISITDGQIYLSPTLFQLGILPAIDVGKSVSRVGGKAQRPVYRAATGELRLDYSQFSELETFTRFGGRLDERTRTVIEHGRRIRACLQQPESSPVSVSEQIILLLALTAKLFDEVPLENMGEAERAVRAVVLNIPPELLARMEANESLNDADRHALLWHASTALDGLGSAHAKA</sequence>